<accession>B0VM84</accession>
<name>THIM_ACIBS</name>
<organism>
    <name type="scientific">Acinetobacter baumannii (strain SDF)</name>
    <dbReference type="NCBI Taxonomy" id="509170"/>
    <lineage>
        <taxon>Bacteria</taxon>
        <taxon>Pseudomonadati</taxon>
        <taxon>Pseudomonadota</taxon>
        <taxon>Gammaproteobacteria</taxon>
        <taxon>Moraxellales</taxon>
        <taxon>Moraxellaceae</taxon>
        <taxon>Acinetobacter</taxon>
        <taxon>Acinetobacter calcoaceticus/baumannii complex</taxon>
    </lineage>
</organism>
<protein>
    <recommendedName>
        <fullName evidence="1">Hydroxyethylthiazole kinase</fullName>
        <ecNumber evidence="1">2.7.1.50</ecNumber>
    </recommendedName>
    <alternativeName>
        <fullName evidence="1">4-methyl-5-beta-hydroxyethylthiazole kinase</fullName>
        <shortName evidence="1">TH kinase</shortName>
        <shortName evidence="1">Thz kinase</shortName>
    </alternativeName>
</protein>
<gene>
    <name evidence="1" type="primary">thiM</name>
    <name type="ordered locus">ABSDF1644</name>
</gene>
<sequence>MTSTSNLIEQVIEAWQNMQAKTPLVQCITNSVAANYTANVLLASGASPAMIDNPYEAESFTKISSALSINLGTPTSEQMQAMQISAKTAQLNNVPWVLDPVGYGPILAWRSQMTDELLQFKPSVIRGNASEISTLAGNQVQSKGVDSTLSSDQAYQQAYVLLAHADCIAISGESDYILSRELDAVIQVNGGSPLQPKITATGCALGALIAAYSAVTTPTIAALSAHIHFAIAGKLAANQAQTMGSFSSIFMDYIHMLDANLIEQYADIKLLDKQA</sequence>
<comment type="function">
    <text evidence="1">Catalyzes the phosphorylation of the hydroxyl group of 4-methyl-5-beta-hydroxyethylthiazole (THZ).</text>
</comment>
<comment type="catalytic activity">
    <reaction evidence="1">
        <text>5-(2-hydroxyethyl)-4-methylthiazole + ATP = 4-methyl-5-(2-phosphooxyethyl)-thiazole + ADP + H(+)</text>
        <dbReference type="Rhea" id="RHEA:24212"/>
        <dbReference type="ChEBI" id="CHEBI:15378"/>
        <dbReference type="ChEBI" id="CHEBI:17957"/>
        <dbReference type="ChEBI" id="CHEBI:30616"/>
        <dbReference type="ChEBI" id="CHEBI:58296"/>
        <dbReference type="ChEBI" id="CHEBI:456216"/>
        <dbReference type="EC" id="2.7.1.50"/>
    </reaction>
</comment>
<comment type="cofactor">
    <cofactor evidence="1">
        <name>Mg(2+)</name>
        <dbReference type="ChEBI" id="CHEBI:18420"/>
    </cofactor>
</comment>
<comment type="pathway">
    <text evidence="1">Cofactor biosynthesis; thiamine diphosphate biosynthesis; 4-methyl-5-(2-phosphoethyl)-thiazole from 5-(2-hydroxyethyl)-4-methylthiazole: step 1/1.</text>
</comment>
<comment type="similarity">
    <text evidence="1">Belongs to the Thz kinase family.</text>
</comment>
<reference key="1">
    <citation type="journal article" date="2008" name="PLoS ONE">
        <title>Comparative analysis of Acinetobacters: three genomes for three lifestyles.</title>
        <authorList>
            <person name="Vallenet D."/>
            <person name="Nordmann P."/>
            <person name="Barbe V."/>
            <person name="Poirel L."/>
            <person name="Mangenot S."/>
            <person name="Bataille E."/>
            <person name="Dossat C."/>
            <person name="Gas S."/>
            <person name="Kreimeyer A."/>
            <person name="Lenoble P."/>
            <person name="Oztas S."/>
            <person name="Poulain J."/>
            <person name="Segurens B."/>
            <person name="Robert C."/>
            <person name="Abergel C."/>
            <person name="Claverie J.-M."/>
            <person name="Raoult D."/>
            <person name="Medigue C."/>
            <person name="Weissenbach J."/>
            <person name="Cruveiller S."/>
        </authorList>
    </citation>
    <scope>NUCLEOTIDE SEQUENCE [LARGE SCALE GENOMIC DNA]</scope>
    <source>
        <strain>SDF</strain>
    </source>
</reference>
<feature type="chain" id="PRO_0000383815" description="Hydroxyethylthiazole kinase">
    <location>
        <begin position="1"/>
        <end position="275"/>
    </location>
</feature>
<feature type="binding site" evidence="1">
    <location>
        <position position="50"/>
    </location>
    <ligand>
        <name>substrate</name>
    </ligand>
</feature>
<feature type="binding site" evidence="1">
    <location>
        <position position="126"/>
    </location>
    <ligand>
        <name>ATP</name>
        <dbReference type="ChEBI" id="CHEBI:30616"/>
    </ligand>
</feature>
<feature type="binding site" evidence="1">
    <location>
        <position position="171"/>
    </location>
    <ligand>
        <name>ATP</name>
        <dbReference type="ChEBI" id="CHEBI:30616"/>
    </ligand>
</feature>
<feature type="binding site" evidence="1">
    <location>
        <position position="200"/>
    </location>
    <ligand>
        <name>substrate</name>
    </ligand>
</feature>
<proteinExistence type="inferred from homology"/>
<keyword id="KW-0067">ATP-binding</keyword>
<keyword id="KW-0418">Kinase</keyword>
<keyword id="KW-0460">Magnesium</keyword>
<keyword id="KW-0479">Metal-binding</keyword>
<keyword id="KW-0547">Nucleotide-binding</keyword>
<keyword id="KW-0784">Thiamine biosynthesis</keyword>
<keyword id="KW-0808">Transferase</keyword>
<dbReference type="EC" id="2.7.1.50" evidence="1"/>
<dbReference type="EMBL" id="CU468230">
    <property type="protein sequence ID" value="CAP00984.1"/>
    <property type="molecule type" value="Genomic_DNA"/>
</dbReference>
<dbReference type="SMR" id="B0VM84"/>
<dbReference type="KEGG" id="abm:ABSDF1644"/>
<dbReference type="HOGENOM" id="CLU_019943_0_1_6"/>
<dbReference type="UniPathway" id="UPA00060">
    <property type="reaction ID" value="UER00139"/>
</dbReference>
<dbReference type="Proteomes" id="UP000001741">
    <property type="component" value="Chromosome"/>
</dbReference>
<dbReference type="GO" id="GO:0005524">
    <property type="term" value="F:ATP binding"/>
    <property type="evidence" value="ECO:0007669"/>
    <property type="project" value="UniProtKB-UniRule"/>
</dbReference>
<dbReference type="GO" id="GO:0004417">
    <property type="term" value="F:hydroxyethylthiazole kinase activity"/>
    <property type="evidence" value="ECO:0007669"/>
    <property type="project" value="UniProtKB-UniRule"/>
</dbReference>
<dbReference type="GO" id="GO:0000287">
    <property type="term" value="F:magnesium ion binding"/>
    <property type="evidence" value="ECO:0007669"/>
    <property type="project" value="UniProtKB-UniRule"/>
</dbReference>
<dbReference type="GO" id="GO:0009228">
    <property type="term" value="P:thiamine biosynthetic process"/>
    <property type="evidence" value="ECO:0007669"/>
    <property type="project" value="UniProtKB-KW"/>
</dbReference>
<dbReference type="GO" id="GO:0009229">
    <property type="term" value="P:thiamine diphosphate biosynthetic process"/>
    <property type="evidence" value="ECO:0007669"/>
    <property type="project" value="UniProtKB-UniRule"/>
</dbReference>
<dbReference type="CDD" id="cd01170">
    <property type="entry name" value="THZ_kinase"/>
    <property type="match status" value="1"/>
</dbReference>
<dbReference type="Gene3D" id="3.40.1190.20">
    <property type="match status" value="1"/>
</dbReference>
<dbReference type="HAMAP" id="MF_00228">
    <property type="entry name" value="Thz_kinase"/>
    <property type="match status" value="1"/>
</dbReference>
<dbReference type="InterPro" id="IPR000417">
    <property type="entry name" value="Hyethyz_kinase"/>
</dbReference>
<dbReference type="InterPro" id="IPR029056">
    <property type="entry name" value="Ribokinase-like"/>
</dbReference>
<dbReference type="NCBIfam" id="NF006830">
    <property type="entry name" value="PRK09355.1"/>
    <property type="match status" value="1"/>
</dbReference>
<dbReference type="Pfam" id="PF02110">
    <property type="entry name" value="HK"/>
    <property type="match status" value="1"/>
</dbReference>
<dbReference type="PIRSF" id="PIRSF000513">
    <property type="entry name" value="Thz_kinase"/>
    <property type="match status" value="1"/>
</dbReference>
<dbReference type="PRINTS" id="PR01099">
    <property type="entry name" value="HYETHTZKNASE"/>
</dbReference>
<dbReference type="SUPFAM" id="SSF53613">
    <property type="entry name" value="Ribokinase-like"/>
    <property type="match status" value="1"/>
</dbReference>
<evidence type="ECO:0000255" key="1">
    <source>
        <dbReference type="HAMAP-Rule" id="MF_00228"/>
    </source>
</evidence>